<reference key="1">
    <citation type="journal article" date="2000" name="Nature">
        <title>The genome sequence of the thermoacidophilic scavenger Thermoplasma acidophilum.</title>
        <authorList>
            <person name="Ruepp A."/>
            <person name="Graml W."/>
            <person name="Santos-Martinez M.-L."/>
            <person name="Koretke K.K."/>
            <person name="Volker C."/>
            <person name="Mewes H.-W."/>
            <person name="Frishman D."/>
            <person name="Stocker S."/>
            <person name="Lupas A.N."/>
            <person name="Baumeister W."/>
        </authorList>
    </citation>
    <scope>NUCLEOTIDE SEQUENCE [LARGE SCALE GENOMIC DNA]</scope>
    <source>
        <strain>ATCC 25905 / DSM 1728 / JCM 9062 / NBRC 15155 / AMRC-C165</strain>
    </source>
</reference>
<sequence>MDELLSMLNFLGMKDPEELFSDIPKSVRKKSIGIGGGLDEYRVIDRAMEIGRKNKTDMINFLGNGIYDRVIPEAVNYILSKPEFLDSYTPYQPEISQGMLQSMFEYQSLISDLMGMDVTNASMYDGYSALGEAARMAYRINGHSKILVPESSYDSKISVLRNYIWGLNMKIMKYRIGEDGMIDLDDLSSKIDSDTSAIVVENPNGYGILDKNIFGVKDIKKDAVLISYVDPISLGVVKPPGEYGSDIAVAEGQQLGIPMNFGGPLLGLMSFKMEHIRRSPGRIIGESIDSNGKRAYVMTLQTREQHIRRAKATSNICSNQALLTLAASAYLSIMGSTGLRKVALLTIKHSRMIKEKLSSIGVKPYFSTESFSDVMFRLERDVMEALASKNILGGLKLRQLISDTPMKDATFFTVTEKTDAAAIEKLAAALEVI</sequence>
<feature type="chain" id="PRO_0000166991" description="Probable glycine dehydrogenase (decarboxylating) subunit 1">
    <location>
        <begin position="1"/>
        <end position="433"/>
    </location>
</feature>
<accession>Q9HII1</accession>
<evidence type="ECO:0000255" key="1">
    <source>
        <dbReference type="HAMAP-Rule" id="MF_00712"/>
    </source>
</evidence>
<proteinExistence type="inferred from homology"/>
<dbReference type="EC" id="1.4.4.2" evidence="1"/>
<dbReference type="EMBL" id="AL445067">
    <property type="protein sequence ID" value="CAC12479.1"/>
    <property type="molecule type" value="Genomic_DNA"/>
</dbReference>
<dbReference type="RefSeq" id="WP_010901765.1">
    <property type="nucleotide sequence ID" value="NC_002578.1"/>
</dbReference>
<dbReference type="SMR" id="Q9HII1"/>
<dbReference type="FunCoup" id="Q9HII1">
    <property type="interactions" value="72"/>
</dbReference>
<dbReference type="STRING" id="273075.gene:9572585"/>
<dbReference type="PaxDb" id="273075-Ta1358"/>
<dbReference type="EnsemblBacteria" id="CAC12479">
    <property type="protein sequence ID" value="CAC12479"/>
    <property type="gene ID" value="CAC12479"/>
</dbReference>
<dbReference type="KEGG" id="tac:Ta1358"/>
<dbReference type="eggNOG" id="arCOG00077">
    <property type="taxonomic scope" value="Archaea"/>
</dbReference>
<dbReference type="HOGENOM" id="CLU_004620_0_2_2"/>
<dbReference type="InParanoid" id="Q9HII1"/>
<dbReference type="OrthoDB" id="17655at2157"/>
<dbReference type="Proteomes" id="UP000001024">
    <property type="component" value="Chromosome"/>
</dbReference>
<dbReference type="GO" id="GO:0004375">
    <property type="term" value="F:glycine dehydrogenase (decarboxylating) activity"/>
    <property type="evidence" value="ECO:0007669"/>
    <property type="project" value="UniProtKB-EC"/>
</dbReference>
<dbReference type="GO" id="GO:0019464">
    <property type="term" value="P:glycine decarboxylation via glycine cleavage system"/>
    <property type="evidence" value="ECO:0007669"/>
    <property type="project" value="UniProtKB-UniRule"/>
</dbReference>
<dbReference type="GO" id="GO:0009116">
    <property type="term" value="P:nucleoside metabolic process"/>
    <property type="evidence" value="ECO:0007669"/>
    <property type="project" value="InterPro"/>
</dbReference>
<dbReference type="Gene3D" id="3.90.1150.10">
    <property type="entry name" value="Aspartate Aminotransferase, domain 1"/>
    <property type="match status" value="1"/>
</dbReference>
<dbReference type="Gene3D" id="3.40.640.10">
    <property type="entry name" value="Type I PLP-dependent aspartate aminotransferase-like (Major domain)"/>
    <property type="match status" value="1"/>
</dbReference>
<dbReference type="HAMAP" id="MF_00712">
    <property type="entry name" value="GcvPA"/>
    <property type="match status" value="1"/>
</dbReference>
<dbReference type="InterPro" id="IPR023010">
    <property type="entry name" value="GcvPA"/>
</dbReference>
<dbReference type="InterPro" id="IPR049315">
    <property type="entry name" value="GDC-P_N"/>
</dbReference>
<dbReference type="InterPro" id="IPR015424">
    <property type="entry name" value="PyrdxlP-dep_Trfase"/>
</dbReference>
<dbReference type="InterPro" id="IPR015421">
    <property type="entry name" value="PyrdxlP-dep_Trfase_major"/>
</dbReference>
<dbReference type="InterPro" id="IPR015422">
    <property type="entry name" value="PyrdxlP-dep_Trfase_small"/>
</dbReference>
<dbReference type="NCBIfam" id="NF001696">
    <property type="entry name" value="PRK00451.1"/>
    <property type="match status" value="1"/>
</dbReference>
<dbReference type="PANTHER" id="PTHR42806">
    <property type="entry name" value="GLYCINE CLEAVAGE SYSTEM P-PROTEIN"/>
    <property type="match status" value="1"/>
</dbReference>
<dbReference type="PANTHER" id="PTHR42806:SF1">
    <property type="entry name" value="GLYCINE DEHYDROGENASE (DECARBOXYLATING)"/>
    <property type="match status" value="1"/>
</dbReference>
<dbReference type="Pfam" id="PF02347">
    <property type="entry name" value="GDC-P"/>
    <property type="match status" value="1"/>
</dbReference>
<dbReference type="PIRSF" id="PIRSF006815">
    <property type="entry name" value="GcvPA"/>
    <property type="match status" value="1"/>
</dbReference>
<dbReference type="SUPFAM" id="SSF53383">
    <property type="entry name" value="PLP-dependent transferases"/>
    <property type="match status" value="1"/>
</dbReference>
<keyword id="KW-0560">Oxidoreductase</keyword>
<keyword id="KW-1185">Reference proteome</keyword>
<comment type="function">
    <text evidence="1">The glycine cleavage system catalyzes the degradation of glycine. The P protein binds the alpha-amino group of glycine through its pyridoxal phosphate cofactor; CO(2) is released and the remaining methylamine moiety is then transferred to the lipoamide cofactor of the H protein.</text>
</comment>
<comment type="catalytic activity">
    <reaction evidence="1">
        <text>N(6)-[(R)-lipoyl]-L-lysyl-[glycine-cleavage complex H protein] + glycine + H(+) = N(6)-[(R)-S(8)-aminomethyldihydrolipoyl]-L-lysyl-[glycine-cleavage complex H protein] + CO2</text>
        <dbReference type="Rhea" id="RHEA:24304"/>
        <dbReference type="Rhea" id="RHEA-COMP:10494"/>
        <dbReference type="Rhea" id="RHEA-COMP:10495"/>
        <dbReference type="ChEBI" id="CHEBI:15378"/>
        <dbReference type="ChEBI" id="CHEBI:16526"/>
        <dbReference type="ChEBI" id="CHEBI:57305"/>
        <dbReference type="ChEBI" id="CHEBI:83099"/>
        <dbReference type="ChEBI" id="CHEBI:83143"/>
        <dbReference type="EC" id="1.4.4.2"/>
    </reaction>
</comment>
<comment type="subunit">
    <text evidence="1">The glycine cleavage system is composed of four proteins: P, T, L and H. In this organism, the P 'protein' is a heterodimer of two subunits.</text>
</comment>
<comment type="similarity">
    <text evidence="1">Belongs to the GcvP family. N-terminal subunit subfamily.</text>
</comment>
<protein>
    <recommendedName>
        <fullName evidence="1">Probable glycine dehydrogenase (decarboxylating) subunit 1</fullName>
        <ecNumber evidence="1">1.4.4.2</ecNumber>
    </recommendedName>
    <alternativeName>
        <fullName evidence="1">Glycine cleavage system P-protein subunit 1</fullName>
    </alternativeName>
    <alternativeName>
        <fullName evidence="1">Glycine decarboxylase subunit 1</fullName>
    </alternativeName>
    <alternativeName>
        <fullName evidence="1">Glycine dehydrogenase (aminomethyl-transferring) subunit 1</fullName>
    </alternativeName>
</protein>
<name>GCSPA_THEAC</name>
<gene>
    <name evidence="1" type="primary">gcvPA</name>
    <name type="ordered locus">Ta1358</name>
</gene>
<organism>
    <name type="scientific">Thermoplasma acidophilum (strain ATCC 25905 / DSM 1728 / JCM 9062 / NBRC 15155 / AMRC-C165)</name>
    <dbReference type="NCBI Taxonomy" id="273075"/>
    <lineage>
        <taxon>Archaea</taxon>
        <taxon>Methanobacteriati</taxon>
        <taxon>Thermoplasmatota</taxon>
        <taxon>Thermoplasmata</taxon>
        <taxon>Thermoplasmatales</taxon>
        <taxon>Thermoplasmataceae</taxon>
        <taxon>Thermoplasma</taxon>
    </lineage>
</organism>